<evidence type="ECO:0000255" key="1">
    <source>
        <dbReference type="HAMAP-Rule" id="MF_00664"/>
    </source>
</evidence>
<proteinExistence type="inferred from homology"/>
<reference key="1">
    <citation type="journal article" date="2002" name="Genome Res.">
        <title>The genome of Methanosarcina acetivorans reveals extensive metabolic and physiological diversity.</title>
        <authorList>
            <person name="Galagan J.E."/>
            <person name="Nusbaum C."/>
            <person name="Roy A."/>
            <person name="Endrizzi M.G."/>
            <person name="Macdonald P."/>
            <person name="FitzHugh W."/>
            <person name="Calvo S."/>
            <person name="Engels R."/>
            <person name="Smirnov S."/>
            <person name="Atnoor D."/>
            <person name="Brown A."/>
            <person name="Allen N."/>
            <person name="Naylor J."/>
            <person name="Stange-Thomann N."/>
            <person name="DeArellano K."/>
            <person name="Johnson R."/>
            <person name="Linton L."/>
            <person name="McEwan P."/>
            <person name="McKernan K."/>
            <person name="Talamas J."/>
            <person name="Tirrell A."/>
            <person name="Ye W."/>
            <person name="Zimmer A."/>
            <person name="Barber R.D."/>
            <person name="Cann I."/>
            <person name="Graham D.E."/>
            <person name="Grahame D.A."/>
            <person name="Guss A.M."/>
            <person name="Hedderich R."/>
            <person name="Ingram-Smith C."/>
            <person name="Kuettner H.C."/>
            <person name="Krzycki J.A."/>
            <person name="Leigh J.A."/>
            <person name="Li W."/>
            <person name="Liu J."/>
            <person name="Mukhopadhyay B."/>
            <person name="Reeve J.N."/>
            <person name="Smith K."/>
            <person name="Springer T.A."/>
            <person name="Umayam L.A."/>
            <person name="White O."/>
            <person name="White R.H."/>
            <person name="de Macario E.C."/>
            <person name="Ferry J.G."/>
            <person name="Jarrell K.F."/>
            <person name="Jing H."/>
            <person name="Macario A.J.L."/>
            <person name="Paulsen I.T."/>
            <person name="Pritchett M."/>
            <person name="Sowers K.R."/>
            <person name="Swanson R.V."/>
            <person name="Zinder S.H."/>
            <person name="Lander E."/>
            <person name="Metcalf W.W."/>
            <person name="Birren B."/>
        </authorList>
    </citation>
    <scope>NUCLEOTIDE SEQUENCE [LARGE SCALE GENOMIC DNA]</scope>
    <source>
        <strain>ATCC 35395 / DSM 2834 / JCM 12185 / C2A</strain>
    </source>
</reference>
<feature type="chain" id="PRO_0000029823" description="Archaetidylserine decarboxylase beta chain" evidence="1">
    <location>
        <begin position="1"/>
        <end position="171"/>
    </location>
</feature>
<feature type="chain" id="PRO_0000029824" description="Archaetidylserine decarboxylase alpha chain" evidence="1">
    <location>
        <begin position="172"/>
        <end position="208"/>
    </location>
</feature>
<feature type="active site" description="Schiff-base intermediate with substrate; via pyruvic acid" evidence="1">
    <location>
        <position position="172"/>
    </location>
</feature>
<feature type="site" description="Cleavage (non-hydrolytic); by autocatalysis" evidence="1">
    <location>
        <begin position="171"/>
        <end position="172"/>
    </location>
</feature>
<feature type="modified residue" description="Pyruvic acid (Ser); by autocatalysis" evidence="1">
    <location>
        <position position="172"/>
    </location>
</feature>
<sequence length="208" mass="23399">MIAKGSEPWLFAAASATALFAILSWATDSLPFLNHAAHMGMALTFFMVIFFRDPERKVEISDAYMISPADGTVIDIRDRKICIFMFLQNVHVNRAPISGKIREITYKKGGYLPAFCKDSERNERNEFIIHSKYGDVEVTQIAGTIARRIVTYSNVNDSVEQGQRIGMIRFGSRVDVTIPHDFDITVCKGERVLAGKTVIATIKNDRDF</sequence>
<accession>Q8TUF2</accession>
<organism>
    <name type="scientific">Methanosarcina acetivorans (strain ATCC 35395 / DSM 2834 / JCM 12185 / C2A)</name>
    <dbReference type="NCBI Taxonomy" id="188937"/>
    <lineage>
        <taxon>Archaea</taxon>
        <taxon>Methanobacteriati</taxon>
        <taxon>Methanobacteriota</taxon>
        <taxon>Stenosarchaea group</taxon>
        <taxon>Methanomicrobia</taxon>
        <taxon>Methanosarcinales</taxon>
        <taxon>Methanosarcinaceae</taxon>
        <taxon>Methanosarcina</taxon>
    </lineage>
</organism>
<dbReference type="EC" id="4.1.1.-" evidence="1"/>
<dbReference type="EMBL" id="AE010299">
    <property type="protein sequence ID" value="AAM03569.1"/>
    <property type="molecule type" value="Genomic_DNA"/>
</dbReference>
<dbReference type="RefSeq" id="WP_011020174.1">
    <property type="nucleotide sequence ID" value="NC_003552.1"/>
</dbReference>
<dbReference type="SMR" id="Q8TUF2"/>
<dbReference type="STRING" id="188937.MA_0115"/>
<dbReference type="EnsemblBacteria" id="AAM03569">
    <property type="protein sequence ID" value="AAM03569"/>
    <property type="gene ID" value="MA_0115"/>
</dbReference>
<dbReference type="GeneID" id="1472007"/>
<dbReference type="KEGG" id="mac:MA_0115"/>
<dbReference type="HOGENOM" id="CLU_072492_1_0_2"/>
<dbReference type="InParanoid" id="Q8TUF2"/>
<dbReference type="OrthoDB" id="50255at2157"/>
<dbReference type="PhylomeDB" id="Q8TUF2"/>
<dbReference type="Proteomes" id="UP000002487">
    <property type="component" value="Chromosome"/>
</dbReference>
<dbReference type="GO" id="GO:0005886">
    <property type="term" value="C:plasma membrane"/>
    <property type="evidence" value="ECO:0007669"/>
    <property type="project" value="UniProtKB-SubCell"/>
</dbReference>
<dbReference type="GO" id="GO:0004609">
    <property type="term" value="F:phosphatidylserine decarboxylase activity"/>
    <property type="evidence" value="ECO:0007669"/>
    <property type="project" value="InterPro"/>
</dbReference>
<dbReference type="GO" id="GO:0008654">
    <property type="term" value="P:phospholipid biosynthetic process"/>
    <property type="evidence" value="ECO:0007669"/>
    <property type="project" value="UniProtKB-UniRule"/>
</dbReference>
<dbReference type="HAMAP" id="MF_00664">
    <property type="entry name" value="PS_decarb_PSD_A"/>
    <property type="match status" value="1"/>
</dbReference>
<dbReference type="InterPro" id="IPR003817">
    <property type="entry name" value="PS_Dcarbxylase"/>
</dbReference>
<dbReference type="InterPro" id="IPR033175">
    <property type="entry name" value="PSD-A"/>
</dbReference>
<dbReference type="NCBIfam" id="NF003685">
    <property type="entry name" value="PRK05305.2-5"/>
    <property type="match status" value="1"/>
</dbReference>
<dbReference type="PANTHER" id="PTHR35809">
    <property type="entry name" value="ARCHAETIDYLSERINE DECARBOXYLASE PROENZYME-RELATED"/>
    <property type="match status" value="1"/>
</dbReference>
<dbReference type="PANTHER" id="PTHR35809:SF1">
    <property type="entry name" value="ARCHAETIDYLSERINE DECARBOXYLASE PROENZYME-RELATED"/>
    <property type="match status" value="1"/>
</dbReference>
<dbReference type="Pfam" id="PF02666">
    <property type="entry name" value="PS_Dcarbxylase"/>
    <property type="match status" value="1"/>
</dbReference>
<gene>
    <name evidence="1" type="primary">asd</name>
    <name type="ordered locus">MA_0115</name>
</gene>
<name>ASD_METAC</name>
<protein>
    <recommendedName>
        <fullName evidence="1">Putative archaetidylserine decarboxylase proenzyme</fullName>
        <ecNumber evidence="1">4.1.1.-</ecNumber>
    </recommendedName>
    <component>
        <recommendedName>
            <fullName evidence="1">Archaetidylserine decarboxylase alpha chain</fullName>
        </recommendedName>
    </component>
    <component>
        <recommendedName>
            <fullName evidence="1">Archaetidylserine decarboxylase beta chain</fullName>
        </recommendedName>
    </component>
</protein>
<keyword id="KW-1003">Cell membrane</keyword>
<keyword id="KW-0210">Decarboxylase</keyword>
<keyword id="KW-0444">Lipid biosynthesis</keyword>
<keyword id="KW-0443">Lipid metabolism</keyword>
<keyword id="KW-0456">Lyase</keyword>
<keyword id="KW-0472">Membrane</keyword>
<keyword id="KW-0594">Phospholipid biosynthesis</keyword>
<keyword id="KW-1208">Phospholipid metabolism</keyword>
<keyword id="KW-0670">Pyruvate</keyword>
<keyword id="KW-1185">Reference proteome</keyword>
<keyword id="KW-0865">Zymogen</keyword>
<comment type="function">
    <text evidence="1">Catalyzes the formation of archaetidylethanolamine (PtdEtn) from archaetidylserine (PtdSer).</text>
</comment>
<comment type="catalytic activity">
    <reaction evidence="1">
        <text>archaetidylserine + H(+) = archaetidylethanolamine + CO2</text>
        <dbReference type="Rhea" id="RHEA:51488"/>
        <dbReference type="ChEBI" id="CHEBI:15378"/>
        <dbReference type="ChEBI" id="CHEBI:16526"/>
        <dbReference type="ChEBI" id="CHEBI:71517"/>
        <dbReference type="ChEBI" id="CHEBI:134176"/>
    </reaction>
</comment>
<comment type="cofactor">
    <cofactor evidence="1">
        <name>pyruvate</name>
        <dbReference type="ChEBI" id="CHEBI:15361"/>
    </cofactor>
    <text evidence="1">Binds 1 pyruvoyl group covalently per subunit.</text>
</comment>
<comment type="subunit">
    <text evidence="1">Heterodimer of a large membrane-associated beta subunit and a small pyruvoyl-containing alpha subunit.</text>
</comment>
<comment type="subcellular location">
    <subcellularLocation>
        <location evidence="1">Cell membrane</location>
        <topology evidence="1">Peripheral membrane protein</topology>
    </subcellularLocation>
</comment>
<comment type="PTM">
    <text evidence="1">Is synthesized initially as an inactive proenzyme. Formation of the active enzyme involves a self-maturation process in which the active site pyruvoyl group is generated from an internal serine residue via an autocatalytic post-translational modification. Two non-identical subunits are generated from the proenzyme in this reaction, and the pyruvate is formed at the N-terminus of the alpha chain, which is derived from the carboxyl end of the proenzyme. The post-translation cleavage follows an unusual pathway, termed non-hydrolytic serinolysis, in which the side chain hydroxyl group of the serine supplies its oxygen atom to form the C-terminus of the beta chain, while the remainder of the serine residue undergoes an oxidative deamination to produce ammonia and the pyruvoyl prosthetic group on the alpha chain.</text>
</comment>
<comment type="similarity">
    <text evidence="1">Belongs to the phosphatidylserine decarboxylase family. PSD-A subfamily.</text>
</comment>